<protein>
    <recommendedName>
        <fullName evidence="1">3'-5' exoribonuclease YhaM</fullName>
        <ecNumber evidence="1">3.1.-.-</ecNumber>
    </recommendedName>
</protein>
<evidence type="ECO:0000255" key="1">
    <source>
        <dbReference type="HAMAP-Rule" id="MF_01427"/>
    </source>
</evidence>
<evidence type="ECO:0000255" key="2">
    <source>
        <dbReference type="PROSITE-ProRule" id="PRU01175"/>
    </source>
</evidence>
<reference key="1">
    <citation type="journal article" date="2003" name="Nature">
        <title>Genome sequence of Bacillus cereus and comparative analysis with Bacillus anthracis.</title>
        <authorList>
            <person name="Ivanova N."/>
            <person name="Sorokin A."/>
            <person name="Anderson I."/>
            <person name="Galleron N."/>
            <person name="Candelon B."/>
            <person name="Kapatral V."/>
            <person name="Bhattacharyya A."/>
            <person name="Reznik G."/>
            <person name="Mikhailova N."/>
            <person name="Lapidus A."/>
            <person name="Chu L."/>
            <person name="Mazur M."/>
            <person name="Goltsman E."/>
            <person name="Larsen N."/>
            <person name="D'Souza M."/>
            <person name="Walunas T."/>
            <person name="Grechkin Y."/>
            <person name="Pusch G."/>
            <person name="Haselkorn R."/>
            <person name="Fonstein M."/>
            <person name="Ehrlich S.D."/>
            <person name="Overbeek R."/>
            <person name="Kyrpides N.C."/>
        </authorList>
    </citation>
    <scope>NUCLEOTIDE SEQUENCE [LARGE SCALE GENOMIC DNA]</scope>
    <source>
        <strain>ATCC 14579 / DSM 31 / CCUG 7414 / JCM 2152 / NBRC 15305 / NCIMB 9373 / NCTC 2599 / NRRL B-3711</strain>
    </source>
</reference>
<name>YHAM_BACCR</name>
<keyword id="KW-0238">DNA-binding</keyword>
<keyword id="KW-0269">Exonuclease</keyword>
<keyword id="KW-0378">Hydrolase</keyword>
<keyword id="KW-0540">Nuclease</keyword>
<keyword id="KW-1185">Reference proteome</keyword>
<feature type="chain" id="PRO_0000109855" description="3'-5' exoribonuclease YhaM">
    <location>
        <begin position="1"/>
        <end position="314"/>
    </location>
</feature>
<feature type="domain" description="HD" evidence="2">
    <location>
        <begin position="163"/>
        <end position="279"/>
    </location>
</feature>
<feature type="DNA-binding region" description="OB">
    <location>
        <begin position="14"/>
        <end position="90"/>
    </location>
</feature>
<comment type="function">
    <text evidence="1">Shows a 3'-5' exoribonuclease activity.</text>
</comment>
<comment type="similarity">
    <text evidence="1">Belongs to the YhaM family.</text>
</comment>
<sequence>MKKKIAEYEVGEQVDIFLLIKTATKGIASNGKPFLTVILQDPSGDIEAKLWDVSPEVEKQYVAETIVKVAGDILNYKGRIQLRVKQIRVANENEVTDISDFVEKAPVKKEDMVEKITQYIFEMRNPNIQRLTRHLLNKHQNEFLDYPAATKNHHEFVSGLAYHVVSMLDLAKAISNLYPSLDKDLLYAGVILHDLGKVIELSGPISTTYTLEGNLLGHISIMVNEIGKAADELQIDAEEVLILQHIVLSHHGKAEWGSPKPPLVKEAEILHYIDNLDAKMNMMDRALGRTKPGEYTERVFALDNRSFYKPSFHN</sequence>
<gene>
    <name evidence="1" type="primary">yhaM</name>
    <name type="ordered locus">BC_1021</name>
</gene>
<accession>Q81H06</accession>
<organism>
    <name type="scientific">Bacillus cereus (strain ATCC 14579 / DSM 31 / CCUG 7414 / JCM 2152 / NBRC 15305 / NCIMB 9373 / NCTC 2599 / NRRL B-3711)</name>
    <dbReference type="NCBI Taxonomy" id="226900"/>
    <lineage>
        <taxon>Bacteria</taxon>
        <taxon>Bacillati</taxon>
        <taxon>Bacillota</taxon>
        <taxon>Bacilli</taxon>
        <taxon>Bacillales</taxon>
        <taxon>Bacillaceae</taxon>
        <taxon>Bacillus</taxon>
        <taxon>Bacillus cereus group</taxon>
    </lineage>
</organism>
<dbReference type="EC" id="3.1.-.-" evidence="1"/>
<dbReference type="EMBL" id="AE016877">
    <property type="protein sequence ID" value="AAP08008.1"/>
    <property type="molecule type" value="Genomic_DNA"/>
</dbReference>
<dbReference type="RefSeq" id="NP_830807.1">
    <property type="nucleotide sequence ID" value="NC_004722.1"/>
</dbReference>
<dbReference type="RefSeq" id="WP_000726638.1">
    <property type="nucleotide sequence ID" value="NZ_CP138336.1"/>
</dbReference>
<dbReference type="SMR" id="Q81H06"/>
<dbReference type="STRING" id="226900.BC_1021"/>
<dbReference type="GeneID" id="69533483"/>
<dbReference type="KEGG" id="bce:BC1021"/>
<dbReference type="PATRIC" id="fig|226900.8.peg.977"/>
<dbReference type="HOGENOM" id="CLU_056349_2_0_9"/>
<dbReference type="OrthoDB" id="9778453at2"/>
<dbReference type="Proteomes" id="UP000001417">
    <property type="component" value="Chromosome"/>
</dbReference>
<dbReference type="GO" id="GO:0000175">
    <property type="term" value="F:3'-5'-RNA exonuclease activity"/>
    <property type="evidence" value="ECO:0007669"/>
    <property type="project" value="UniProtKB-UniRule"/>
</dbReference>
<dbReference type="GO" id="GO:0003677">
    <property type="term" value="F:DNA binding"/>
    <property type="evidence" value="ECO:0007669"/>
    <property type="project" value="UniProtKB-KW"/>
</dbReference>
<dbReference type="GO" id="GO:0031125">
    <property type="term" value="P:rRNA 3'-end processing"/>
    <property type="evidence" value="ECO:0000318"/>
    <property type="project" value="GO_Central"/>
</dbReference>
<dbReference type="CDD" id="cd00077">
    <property type="entry name" value="HDc"/>
    <property type="match status" value="1"/>
</dbReference>
<dbReference type="CDD" id="cd04492">
    <property type="entry name" value="YhaM_OBF_like"/>
    <property type="match status" value="1"/>
</dbReference>
<dbReference type="FunFam" id="1.10.3210.10:FF:000008">
    <property type="entry name" value="3'-5' exoribonuclease YhaM"/>
    <property type="match status" value="1"/>
</dbReference>
<dbReference type="Gene3D" id="1.10.3210.10">
    <property type="entry name" value="Hypothetical protein af1432"/>
    <property type="match status" value="1"/>
</dbReference>
<dbReference type="Gene3D" id="2.40.50.140">
    <property type="entry name" value="Nucleic acid-binding proteins"/>
    <property type="match status" value="1"/>
</dbReference>
<dbReference type="HAMAP" id="MF_01427">
    <property type="entry name" value="3_5_Exoribonuc_YhaM"/>
    <property type="match status" value="1"/>
</dbReference>
<dbReference type="InterPro" id="IPR020873">
    <property type="entry name" value="3'-5'_exoribonuclease_YhaM"/>
</dbReference>
<dbReference type="InterPro" id="IPR003607">
    <property type="entry name" value="HD/PDEase_dom"/>
</dbReference>
<dbReference type="InterPro" id="IPR006674">
    <property type="entry name" value="HD_domain"/>
</dbReference>
<dbReference type="InterPro" id="IPR012340">
    <property type="entry name" value="NA-bd_OB-fold"/>
</dbReference>
<dbReference type="InterPro" id="IPR004365">
    <property type="entry name" value="NA-bd_OB_tRNA"/>
</dbReference>
<dbReference type="InterPro" id="IPR050798">
    <property type="entry name" value="YhaM_exoribonuc/phosphodiest"/>
</dbReference>
<dbReference type="NCBIfam" id="NF010007">
    <property type="entry name" value="PRK13480.1"/>
    <property type="match status" value="1"/>
</dbReference>
<dbReference type="PANTHER" id="PTHR37294">
    <property type="entry name" value="3'-5' EXORIBONUCLEASE YHAM"/>
    <property type="match status" value="1"/>
</dbReference>
<dbReference type="PANTHER" id="PTHR37294:SF1">
    <property type="entry name" value="3'-5' EXORIBONUCLEASE YHAM"/>
    <property type="match status" value="1"/>
</dbReference>
<dbReference type="Pfam" id="PF01966">
    <property type="entry name" value="HD"/>
    <property type="match status" value="1"/>
</dbReference>
<dbReference type="Pfam" id="PF01336">
    <property type="entry name" value="tRNA_anti-codon"/>
    <property type="match status" value="1"/>
</dbReference>
<dbReference type="SMART" id="SM00471">
    <property type="entry name" value="HDc"/>
    <property type="match status" value="1"/>
</dbReference>
<dbReference type="SUPFAM" id="SSF109604">
    <property type="entry name" value="HD-domain/PDEase-like"/>
    <property type="match status" value="1"/>
</dbReference>
<dbReference type="SUPFAM" id="SSF50249">
    <property type="entry name" value="Nucleic acid-binding proteins"/>
    <property type="match status" value="1"/>
</dbReference>
<dbReference type="PROSITE" id="PS51831">
    <property type="entry name" value="HD"/>
    <property type="match status" value="1"/>
</dbReference>
<proteinExistence type="inferred from homology"/>